<gene>
    <name evidence="1" type="primary">ade2</name>
    <name type="ordered locus">CHY_0699</name>
</gene>
<sequence>MKPIKDLVEVALGKKPADLVLKNAQVFNSFTGEFVTGDVAVVAGYIAGTGEYEGKTTYDLQGAYVTPGFIDGHVHIESSMVAPAEFARALVPAGTLTAVVDPHEIANVSGTAGIRYMLEASSNLPINIYLMLPSCVPATSLETAGAVLTARELSEFINHPRVLGLGELMDYPGVLNTHEEMLKKLAVTEGKLIDGHAPGISGKELTAYIAAGVNSEHECTTAEEARERLSRGMYLMLREGSATKNLLDLLPAVDRYTASRCFFVTDDRHPEDLIKLGSINHMVKLAVSAGADLPTVLQMATINAANYFRLYDLGAIAPGYRADILVFEDLQEFKPKYVFKDGKLVAENGKPLFTGYPVDDRAVRNTMRLKEINPEKLKIPAKSNRARVIGLIPHQIVTKKLELEVPVEGGYFKTSTEKDIAKLAVFERHNYTGNVGVGLIHGLGLKKGAIASTVAHDSHNLVVAGMSDEDIIAAVEELKRIGGGLTVVADGQVLGSLPLPIAGLMSDRTLYEVQEELEKLHRIVRNLGVSENYDPFMTLAFLSLPVIPELKLTDLGLVDVSTFSVVPVSL</sequence>
<proteinExistence type="inferred from homology"/>
<protein>
    <recommendedName>
        <fullName evidence="1">Adenine deaminase 2</fullName>
        <shortName evidence="1">Adenase 2</shortName>
        <shortName evidence="1">Adenine aminase 2</shortName>
        <ecNumber evidence="1">3.5.4.2</ecNumber>
    </recommendedName>
</protein>
<comment type="catalytic activity">
    <reaction evidence="1">
        <text>adenine + H2O + H(+) = hypoxanthine + NH4(+)</text>
        <dbReference type="Rhea" id="RHEA:23688"/>
        <dbReference type="ChEBI" id="CHEBI:15377"/>
        <dbReference type="ChEBI" id="CHEBI:15378"/>
        <dbReference type="ChEBI" id="CHEBI:16708"/>
        <dbReference type="ChEBI" id="CHEBI:17368"/>
        <dbReference type="ChEBI" id="CHEBI:28938"/>
        <dbReference type="EC" id="3.5.4.2"/>
    </reaction>
</comment>
<comment type="cofactor">
    <cofactor evidence="1">
        <name>Mn(2+)</name>
        <dbReference type="ChEBI" id="CHEBI:29035"/>
    </cofactor>
</comment>
<comment type="similarity">
    <text evidence="1">Belongs to the metallo-dependent hydrolases superfamily. Adenine deaminase family.</text>
</comment>
<evidence type="ECO:0000255" key="1">
    <source>
        <dbReference type="HAMAP-Rule" id="MF_01518"/>
    </source>
</evidence>
<reference key="1">
    <citation type="journal article" date="2005" name="PLoS Genet.">
        <title>Life in hot carbon monoxide: the complete genome sequence of Carboxydothermus hydrogenoformans Z-2901.</title>
        <authorList>
            <person name="Wu M."/>
            <person name="Ren Q."/>
            <person name="Durkin A.S."/>
            <person name="Daugherty S.C."/>
            <person name="Brinkac L.M."/>
            <person name="Dodson R.J."/>
            <person name="Madupu R."/>
            <person name="Sullivan S.A."/>
            <person name="Kolonay J.F."/>
            <person name="Nelson W.C."/>
            <person name="Tallon L.J."/>
            <person name="Jones K.M."/>
            <person name="Ulrich L.E."/>
            <person name="Gonzalez J.M."/>
            <person name="Zhulin I.B."/>
            <person name="Robb F.T."/>
            <person name="Eisen J.A."/>
        </authorList>
    </citation>
    <scope>NUCLEOTIDE SEQUENCE [LARGE SCALE GENOMIC DNA]</scope>
    <source>
        <strain>ATCC BAA-161 / DSM 6008 / Z-2901</strain>
    </source>
</reference>
<name>ADEC2_CARHZ</name>
<dbReference type="EC" id="3.5.4.2" evidence="1"/>
<dbReference type="EMBL" id="CP000141">
    <property type="protein sequence ID" value="ABB15047.1"/>
    <property type="molecule type" value="Genomic_DNA"/>
</dbReference>
<dbReference type="SMR" id="Q3AE81"/>
<dbReference type="FunCoup" id="Q3AE81">
    <property type="interactions" value="92"/>
</dbReference>
<dbReference type="STRING" id="246194.CHY_0699"/>
<dbReference type="KEGG" id="chy:CHY_0699"/>
<dbReference type="eggNOG" id="COG1001">
    <property type="taxonomic scope" value="Bacteria"/>
</dbReference>
<dbReference type="HOGENOM" id="CLU_027935_0_0_9"/>
<dbReference type="InParanoid" id="Q3AE81"/>
<dbReference type="OrthoDB" id="9775607at2"/>
<dbReference type="Proteomes" id="UP000002706">
    <property type="component" value="Chromosome"/>
</dbReference>
<dbReference type="GO" id="GO:0000034">
    <property type="term" value="F:adenine deaminase activity"/>
    <property type="evidence" value="ECO:0007669"/>
    <property type="project" value="UniProtKB-UniRule"/>
</dbReference>
<dbReference type="GO" id="GO:0006146">
    <property type="term" value="P:adenine catabolic process"/>
    <property type="evidence" value="ECO:0007669"/>
    <property type="project" value="InterPro"/>
</dbReference>
<dbReference type="CDD" id="cd01295">
    <property type="entry name" value="AdeC"/>
    <property type="match status" value="1"/>
</dbReference>
<dbReference type="Gene3D" id="3.20.20.140">
    <property type="entry name" value="Metal-dependent hydrolases"/>
    <property type="match status" value="1"/>
</dbReference>
<dbReference type="Gene3D" id="2.30.40.10">
    <property type="entry name" value="Urease, subunit C, domain 1"/>
    <property type="match status" value="1"/>
</dbReference>
<dbReference type="HAMAP" id="MF_01518">
    <property type="entry name" value="Adenine_deamin"/>
    <property type="match status" value="1"/>
</dbReference>
<dbReference type="InterPro" id="IPR006679">
    <property type="entry name" value="Adenine_deam"/>
</dbReference>
<dbReference type="InterPro" id="IPR026912">
    <property type="entry name" value="Adenine_deam_C"/>
</dbReference>
<dbReference type="InterPro" id="IPR006680">
    <property type="entry name" value="Amidohydro-rel"/>
</dbReference>
<dbReference type="InterPro" id="IPR011059">
    <property type="entry name" value="Metal-dep_hydrolase_composite"/>
</dbReference>
<dbReference type="InterPro" id="IPR032466">
    <property type="entry name" value="Metal_Hydrolase"/>
</dbReference>
<dbReference type="NCBIfam" id="TIGR01178">
    <property type="entry name" value="ade"/>
    <property type="match status" value="1"/>
</dbReference>
<dbReference type="PANTHER" id="PTHR11113:SF2">
    <property type="entry name" value="ADENINE DEAMINASE"/>
    <property type="match status" value="1"/>
</dbReference>
<dbReference type="PANTHER" id="PTHR11113">
    <property type="entry name" value="N-ACETYLGLUCOSAMINE-6-PHOSPHATE DEACETYLASE"/>
    <property type="match status" value="1"/>
</dbReference>
<dbReference type="Pfam" id="PF13382">
    <property type="entry name" value="Adenine_deam_C"/>
    <property type="match status" value="1"/>
</dbReference>
<dbReference type="Pfam" id="PF01979">
    <property type="entry name" value="Amidohydro_1"/>
    <property type="match status" value="1"/>
</dbReference>
<dbReference type="SUPFAM" id="SSF51338">
    <property type="entry name" value="Composite domain of metallo-dependent hydrolases"/>
    <property type="match status" value="1"/>
</dbReference>
<dbReference type="SUPFAM" id="SSF51556">
    <property type="entry name" value="Metallo-dependent hydrolases"/>
    <property type="match status" value="1"/>
</dbReference>
<organism>
    <name type="scientific">Carboxydothermus hydrogenoformans (strain ATCC BAA-161 / DSM 6008 / Z-2901)</name>
    <dbReference type="NCBI Taxonomy" id="246194"/>
    <lineage>
        <taxon>Bacteria</taxon>
        <taxon>Bacillati</taxon>
        <taxon>Bacillota</taxon>
        <taxon>Clostridia</taxon>
        <taxon>Thermoanaerobacterales</taxon>
        <taxon>Thermoanaerobacteraceae</taxon>
        <taxon>Carboxydothermus</taxon>
    </lineage>
</organism>
<keyword id="KW-0378">Hydrolase</keyword>
<keyword id="KW-0464">Manganese</keyword>
<keyword id="KW-1185">Reference proteome</keyword>
<accession>Q3AE81</accession>
<feature type="chain" id="PRO_0000292378" description="Adenine deaminase 2">
    <location>
        <begin position="1"/>
        <end position="570"/>
    </location>
</feature>